<comment type="function">
    <text evidence="1">This is one of the proteins that binds to the 5S RNA in the ribosome where it forms part of the central protuberance.</text>
</comment>
<comment type="subunit">
    <text evidence="1">Part of the 50S ribosomal subunit; part of the 5S rRNA/L5/L18/L25 subcomplex. Contacts the 5S rRNA. Binds to the 5S rRNA independently of L5 and L18.</text>
</comment>
<comment type="similarity">
    <text evidence="1">Belongs to the bacterial ribosomal protein bL25 family. CTC subfamily.</text>
</comment>
<sequence length="207" mass="23237">MEITEIKVKKRDKIGKQFAKKYRRSNLIPGVVYGAHLKENIHILVEKKDLWSLIKKGHAKEQHLLRLIIENGENTITENAILQDLQIDPIKDEFLHVDFHAITLEELVDVYVPILLVGEAKGIKQGGILQHGVEEILIRALPLDVPPHIEVDITDLEIGESITVGDLKFPENIKVLTPLDEVVVGIIPPKGYTEEVTTGEAQTESQT</sequence>
<keyword id="KW-1185">Reference proteome</keyword>
<keyword id="KW-0687">Ribonucleoprotein</keyword>
<keyword id="KW-0689">Ribosomal protein</keyword>
<keyword id="KW-0694">RNA-binding</keyword>
<keyword id="KW-0699">rRNA-binding</keyword>
<evidence type="ECO:0000255" key="1">
    <source>
        <dbReference type="HAMAP-Rule" id="MF_01334"/>
    </source>
</evidence>
<evidence type="ECO:0000305" key="2"/>
<feature type="chain" id="PRO_1000142519" description="Large ribosomal subunit protein bL25">
    <location>
        <begin position="1"/>
        <end position="207"/>
    </location>
</feature>
<gene>
    <name evidence="1" type="primary">rplY</name>
    <name evidence="1" type="synonym">ctc</name>
    <name type="ordered locus">Dtur_0784</name>
</gene>
<protein>
    <recommendedName>
        <fullName evidence="1">Large ribosomal subunit protein bL25</fullName>
    </recommendedName>
    <alternativeName>
        <fullName evidence="2">50S ribosomal protein L25</fullName>
    </alternativeName>
    <alternativeName>
        <fullName evidence="1">General stress protein CTC</fullName>
    </alternativeName>
</protein>
<accession>B8DZY2</accession>
<reference key="1">
    <citation type="journal article" date="2016" name="Front. Microbiol.">
        <title>The complete genome sequence of hyperthermophile Dictyoglomus turgidum DSM 6724 reveals a specialized carbohydrate fermentor.</title>
        <authorList>
            <person name="Brumm P.J."/>
            <person name="Gowda K."/>
            <person name="Robb F.T."/>
            <person name="Mead D.A."/>
        </authorList>
    </citation>
    <scope>NUCLEOTIDE SEQUENCE [LARGE SCALE GENOMIC DNA]</scope>
    <source>
        <strain>DSM 6724 / Z-1310</strain>
    </source>
</reference>
<organism>
    <name type="scientific">Dictyoglomus turgidum (strain DSM 6724 / Z-1310)</name>
    <dbReference type="NCBI Taxonomy" id="515635"/>
    <lineage>
        <taxon>Bacteria</taxon>
        <taxon>Pseudomonadati</taxon>
        <taxon>Dictyoglomota</taxon>
        <taxon>Dictyoglomia</taxon>
        <taxon>Dictyoglomales</taxon>
        <taxon>Dictyoglomaceae</taxon>
        <taxon>Dictyoglomus</taxon>
    </lineage>
</organism>
<name>RL25_DICTD</name>
<dbReference type="EMBL" id="CP001251">
    <property type="protein sequence ID" value="ACK42065.1"/>
    <property type="molecule type" value="Genomic_DNA"/>
</dbReference>
<dbReference type="RefSeq" id="WP_012583150.1">
    <property type="nucleotide sequence ID" value="NC_011661.1"/>
</dbReference>
<dbReference type="RefSeq" id="YP_002352679.1">
    <property type="nucleotide sequence ID" value="NC_011661.1"/>
</dbReference>
<dbReference type="SMR" id="B8DZY2"/>
<dbReference type="FunCoup" id="B8DZY2">
    <property type="interactions" value="290"/>
</dbReference>
<dbReference type="STRING" id="515635.Dtur_0784"/>
<dbReference type="EnsemblBacteria" id="ACK42065">
    <property type="protein sequence ID" value="ACK42065"/>
    <property type="gene ID" value="Dtur_0784"/>
</dbReference>
<dbReference type="KEGG" id="dtu:Dtur_0784"/>
<dbReference type="eggNOG" id="COG1825">
    <property type="taxonomic scope" value="Bacteria"/>
</dbReference>
<dbReference type="HOGENOM" id="CLU_075939_2_0_0"/>
<dbReference type="InParanoid" id="B8DZY2"/>
<dbReference type="OrthoDB" id="9806411at2"/>
<dbReference type="Proteomes" id="UP000007719">
    <property type="component" value="Chromosome"/>
</dbReference>
<dbReference type="GO" id="GO:0022625">
    <property type="term" value="C:cytosolic large ribosomal subunit"/>
    <property type="evidence" value="ECO:0000318"/>
    <property type="project" value="GO_Central"/>
</dbReference>
<dbReference type="GO" id="GO:0008097">
    <property type="term" value="F:5S rRNA binding"/>
    <property type="evidence" value="ECO:0000318"/>
    <property type="project" value="GO_Central"/>
</dbReference>
<dbReference type="GO" id="GO:0003735">
    <property type="term" value="F:structural constituent of ribosome"/>
    <property type="evidence" value="ECO:0007669"/>
    <property type="project" value="InterPro"/>
</dbReference>
<dbReference type="GO" id="GO:0006412">
    <property type="term" value="P:translation"/>
    <property type="evidence" value="ECO:0000318"/>
    <property type="project" value="GO_Central"/>
</dbReference>
<dbReference type="CDD" id="cd00495">
    <property type="entry name" value="Ribosomal_L25_TL5_CTC"/>
    <property type="match status" value="1"/>
</dbReference>
<dbReference type="FunFam" id="2.40.240.10:FF:000043">
    <property type="entry name" value="50S ribosomal protein L25"/>
    <property type="match status" value="1"/>
</dbReference>
<dbReference type="Gene3D" id="2.170.120.20">
    <property type="entry name" value="Ribosomal protein L25, beta domain"/>
    <property type="match status" value="1"/>
</dbReference>
<dbReference type="Gene3D" id="2.40.240.10">
    <property type="entry name" value="Ribosomal Protein L25, Chain P"/>
    <property type="match status" value="1"/>
</dbReference>
<dbReference type="HAMAP" id="MF_01334">
    <property type="entry name" value="Ribosomal_bL25_CTC"/>
    <property type="match status" value="1"/>
</dbReference>
<dbReference type="InterPro" id="IPR020056">
    <property type="entry name" value="Rbsml_bL25/Gln-tRNA_synth_N"/>
</dbReference>
<dbReference type="InterPro" id="IPR011035">
    <property type="entry name" value="Ribosomal_bL25/Gln-tRNA_synth"/>
</dbReference>
<dbReference type="InterPro" id="IPR020057">
    <property type="entry name" value="Ribosomal_bL25_b-dom"/>
</dbReference>
<dbReference type="InterPro" id="IPR037121">
    <property type="entry name" value="Ribosomal_bL25_C"/>
</dbReference>
<dbReference type="InterPro" id="IPR001021">
    <property type="entry name" value="Ribosomal_bL25_long"/>
</dbReference>
<dbReference type="InterPro" id="IPR029751">
    <property type="entry name" value="Ribosomal_L25_dom"/>
</dbReference>
<dbReference type="InterPro" id="IPR020930">
    <property type="entry name" value="Ribosomal_uL5_bac-type"/>
</dbReference>
<dbReference type="NCBIfam" id="TIGR00731">
    <property type="entry name" value="bL25_bact_ctc"/>
    <property type="match status" value="1"/>
</dbReference>
<dbReference type="NCBIfam" id="NF004139">
    <property type="entry name" value="PRK05618.4-2"/>
    <property type="match status" value="1"/>
</dbReference>
<dbReference type="PANTHER" id="PTHR33284">
    <property type="entry name" value="RIBOSOMAL PROTEIN L25/GLN-TRNA SYNTHETASE, ANTI-CODON-BINDING DOMAIN-CONTAINING PROTEIN"/>
    <property type="match status" value="1"/>
</dbReference>
<dbReference type="PANTHER" id="PTHR33284:SF1">
    <property type="entry name" value="RIBOSOMAL PROTEIN L25_GLN-TRNA SYNTHETASE, ANTI-CODON-BINDING DOMAIN-CONTAINING PROTEIN"/>
    <property type="match status" value="1"/>
</dbReference>
<dbReference type="Pfam" id="PF01386">
    <property type="entry name" value="Ribosomal_L25p"/>
    <property type="match status" value="1"/>
</dbReference>
<dbReference type="Pfam" id="PF14693">
    <property type="entry name" value="Ribosomal_TL5_C"/>
    <property type="match status" value="1"/>
</dbReference>
<dbReference type="SUPFAM" id="SSF50715">
    <property type="entry name" value="Ribosomal protein L25-like"/>
    <property type="match status" value="1"/>
</dbReference>
<proteinExistence type="inferred from homology"/>